<proteinExistence type="inferred from homology"/>
<organism>
    <name type="scientific">Xylella fastidiosa (strain Temecula1 / ATCC 700964)</name>
    <dbReference type="NCBI Taxonomy" id="183190"/>
    <lineage>
        <taxon>Bacteria</taxon>
        <taxon>Pseudomonadati</taxon>
        <taxon>Pseudomonadota</taxon>
        <taxon>Gammaproteobacteria</taxon>
        <taxon>Lysobacterales</taxon>
        <taxon>Lysobacteraceae</taxon>
        <taxon>Xylella</taxon>
    </lineage>
</organism>
<feature type="chain" id="PRO_0000142577" description="Nus factor SuhB">
    <location>
        <begin position="1"/>
        <end position="275"/>
    </location>
</feature>
<feature type="binding site" evidence="2">
    <location>
        <position position="68"/>
    </location>
    <ligand>
        <name>Mg(2+)</name>
        <dbReference type="ChEBI" id="CHEBI:18420"/>
    </ligand>
</feature>
<feature type="binding site" evidence="1">
    <location>
        <position position="68"/>
    </location>
    <ligand>
        <name>substrate</name>
    </ligand>
</feature>
<feature type="binding site" evidence="2">
    <location>
        <position position="83"/>
    </location>
    <ligand>
        <name>Mg(2+)</name>
        <dbReference type="ChEBI" id="CHEBI:18420"/>
    </ligand>
</feature>
<feature type="binding site" evidence="1">
    <location>
        <begin position="85"/>
        <end position="88"/>
    </location>
    <ligand>
        <name>substrate</name>
    </ligand>
</feature>
<feature type="binding site" evidence="2">
    <location>
        <position position="85"/>
    </location>
    <ligand>
        <name>Mg(2+)</name>
        <dbReference type="ChEBI" id="CHEBI:18420"/>
    </ligand>
</feature>
<feature type="binding site" evidence="1">
    <location>
        <position position="182"/>
    </location>
    <ligand>
        <name>substrate</name>
    </ligand>
</feature>
<feature type="binding site" evidence="1">
    <location>
        <position position="211"/>
    </location>
    <ligand>
        <name>substrate</name>
    </ligand>
</feature>
<sequence length="275" mass="30206">MQKPAVNIMVKAARSAGNVLLRHINKLETLHVIQKSRMDYASDVDEMAEKVIVKELKRAYPDYGILGEEGGLQGNHRIMWVIDPLDGTSNYLRGFPHYCVSIALVENGEPTDAVIFDPLRNELFTASRGAGAVLNERKIRVANRKDLNGTMLNTGFSPRERSRAHAQLKCVDALLMQAEDIRRSGSAALDLAYVACGRADAYFEAGIKVWDVAAGMLLVREAGGYVCDFKGADAPRMDDKGPESCQLIAGNIKVAHALQQVIVSSGYGREFDPKR</sequence>
<keyword id="KW-0143">Chaperone</keyword>
<keyword id="KW-0963">Cytoplasm</keyword>
<keyword id="KW-0378">Hydrolase</keyword>
<keyword id="KW-0460">Magnesium</keyword>
<keyword id="KW-0479">Metal-binding</keyword>
<keyword id="KW-1185">Reference proteome</keyword>
<keyword id="KW-0690">Ribosome biogenesis</keyword>
<keyword id="KW-0694">RNA-binding</keyword>
<keyword id="KW-0804">Transcription</keyword>
<keyword id="KW-0889">Transcription antitermination</keyword>
<keyword id="KW-0805">Transcription regulation</keyword>
<dbReference type="EC" id="3.1.3.25" evidence="2"/>
<dbReference type="EMBL" id="AE009442">
    <property type="protein sequence ID" value="AAO29337.1"/>
    <property type="molecule type" value="Genomic_DNA"/>
</dbReference>
<dbReference type="RefSeq" id="WP_004088505.1">
    <property type="nucleotide sequence ID" value="NC_004556.1"/>
</dbReference>
<dbReference type="SMR" id="Q87BG1"/>
<dbReference type="KEGG" id="xft:PD_1493"/>
<dbReference type="HOGENOM" id="CLU_044118_0_4_6"/>
<dbReference type="Proteomes" id="UP000002516">
    <property type="component" value="Chromosome"/>
</dbReference>
<dbReference type="GO" id="GO:0005737">
    <property type="term" value="C:cytoplasm"/>
    <property type="evidence" value="ECO:0007669"/>
    <property type="project" value="UniProtKB-SubCell"/>
</dbReference>
<dbReference type="GO" id="GO:0008934">
    <property type="term" value="F:inositol monophosphate 1-phosphatase activity"/>
    <property type="evidence" value="ECO:0007669"/>
    <property type="project" value="InterPro"/>
</dbReference>
<dbReference type="GO" id="GO:0046872">
    <property type="term" value="F:metal ion binding"/>
    <property type="evidence" value="ECO:0007669"/>
    <property type="project" value="UniProtKB-KW"/>
</dbReference>
<dbReference type="GO" id="GO:0003723">
    <property type="term" value="F:RNA binding"/>
    <property type="evidence" value="ECO:0007669"/>
    <property type="project" value="UniProtKB-KW"/>
</dbReference>
<dbReference type="GO" id="GO:0006020">
    <property type="term" value="P:inositol metabolic process"/>
    <property type="evidence" value="ECO:0007669"/>
    <property type="project" value="TreeGrafter"/>
</dbReference>
<dbReference type="GO" id="GO:0046854">
    <property type="term" value="P:phosphatidylinositol phosphate biosynthetic process"/>
    <property type="evidence" value="ECO:0007669"/>
    <property type="project" value="InterPro"/>
</dbReference>
<dbReference type="GO" id="GO:0042254">
    <property type="term" value="P:ribosome biogenesis"/>
    <property type="evidence" value="ECO:0007669"/>
    <property type="project" value="UniProtKB-KW"/>
</dbReference>
<dbReference type="GO" id="GO:0007165">
    <property type="term" value="P:signal transduction"/>
    <property type="evidence" value="ECO:0007669"/>
    <property type="project" value="TreeGrafter"/>
</dbReference>
<dbReference type="GO" id="GO:0031564">
    <property type="term" value="P:transcription antitermination"/>
    <property type="evidence" value="ECO:0007669"/>
    <property type="project" value="UniProtKB-KW"/>
</dbReference>
<dbReference type="CDD" id="cd01639">
    <property type="entry name" value="IMPase"/>
    <property type="match status" value="1"/>
</dbReference>
<dbReference type="FunFam" id="3.30.540.10:FF:000017">
    <property type="entry name" value="Inositol-1-monophosphatase"/>
    <property type="match status" value="1"/>
</dbReference>
<dbReference type="FunFam" id="3.40.190.80:FF:000002">
    <property type="entry name" value="Inositol-1-monophosphatase"/>
    <property type="match status" value="1"/>
</dbReference>
<dbReference type="Gene3D" id="3.40.190.80">
    <property type="match status" value="1"/>
</dbReference>
<dbReference type="Gene3D" id="3.30.540.10">
    <property type="entry name" value="Fructose-1,6-Bisphosphatase, subunit A, domain 1"/>
    <property type="match status" value="1"/>
</dbReference>
<dbReference type="InterPro" id="IPR033942">
    <property type="entry name" value="IMPase"/>
</dbReference>
<dbReference type="InterPro" id="IPR020583">
    <property type="entry name" value="Inositol_monoP_metal-BS"/>
</dbReference>
<dbReference type="InterPro" id="IPR000760">
    <property type="entry name" value="Inositol_monophosphatase-like"/>
</dbReference>
<dbReference type="InterPro" id="IPR020550">
    <property type="entry name" value="Inositol_monophosphatase_CS"/>
</dbReference>
<dbReference type="InterPro" id="IPR022337">
    <property type="entry name" value="Inositol_monophosphatase_SuhB"/>
</dbReference>
<dbReference type="PANTHER" id="PTHR20854">
    <property type="entry name" value="INOSITOL MONOPHOSPHATASE"/>
    <property type="match status" value="1"/>
</dbReference>
<dbReference type="PANTHER" id="PTHR20854:SF4">
    <property type="entry name" value="INOSITOL-1-MONOPHOSPHATASE-RELATED"/>
    <property type="match status" value="1"/>
</dbReference>
<dbReference type="Pfam" id="PF00459">
    <property type="entry name" value="Inositol_P"/>
    <property type="match status" value="1"/>
</dbReference>
<dbReference type="PRINTS" id="PR00377">
    <property type="entry name" value="IMPHPHTASES"/>
</dbReference>
<dbReference type="PRINTS" id="PR01959">
    <property type="entry name" value="SBIMPHPHTASE"/>
</dbReference>
<dbReference type="SUPFAM" id="SSF56655">
    <property type="entry name" value="Carbohydrate phosphatase"/>
    <property type="match status" value="1"/>
</dbReference>
<dbReference type="PROSITE" id="PS00629">
    <property type="entry name" value="IMP_1"/>
    <property type="match status" value="1"/>
</dbReference>
<dbReference type="PROSITE" id="PS00630">
    <property type="entry name" value="IMP_2"/>
    <property type="match status" value="1"/>
</dbReference>
<name>SUHB_XYLFT</name>
<reference key="1">
    <citation type="journal article" date="2003" name="J. Bacteriol.">
        <title>Comparative analyses of the complete genome sequences of Pierce's disease and citrus variegated chlorosis strains of Xylella fastidiosa.</title>
        <authorList>
            <person name="Van Sluys M.A."/>
            <person name="de Oliveira M.C."/>
            <person name="Monteiro-Vitorello C.B."/>
            <person name="Miyaki C.Y."/>
            <person name="Furlan L.R."/>
            <person name="Camargo L.E.A."/>
            <person name="da Silva A.C.R."/>
            <person name="Moon D.H."/>
            <person name="Takita M.A."/>
            <person name="Lemos E.G.M."/>
            <person name="Machado M.A."/>
            <person name="Ferro M.I.T."/>
            <person name="da Silva F.R."/>
            <person name="Goldman M.H.S."/>
            <person name="Goldman G.H."/>
            <person name="Lemos M.V.F."/>
            <person name="El-Dorry H."/>
            <person name="Tsai S.M."/>
            <person name="Carrer H."/>
            <person name="Carraro D.M."/>
            <person name="de Oliveira R.C."/>
            <person name="Nunes L.R."/>
            <person name="Siqueira W.J."/>
            <person name="Coutinho L.L."/>
            <person name="Kimura E.T."/>
            <person name="Ferro E.S."/>
            <person name="Harakava R."/>
            <person name="Kuramae E.E."/>
            <person name="Marino C.L."/>
            <person name="Giglioti E."/>
            <person name="Abreu I.L."/>
            <person name="Alves L.M.C."/>
            <person name="do Amaral A.M."/>
            <person name="Baia G.S."/>
            <person name="Blanco S.R."/>
            <person name="Brito M.S."/>
            <person name="Cannavan F.S."/>
            <person name="Celestino A.V."/>
            <person name="da Cunha A.F."/>
            <person name="Fenille R.C."/>
            <person name="Ferro J.A."/>
            <person name="Formighieri E.F."/>
            <person name="Kishi L.T."/>
            <person name="Leoni S.G."/>
            <person name="Oliveira A.R."/>
            <person name="Rosa V.E. Jr."/>
            <person name="Sassaki F.T."/>
            <person name="Sena J.A.D."/>
            <person name="de Souza A.A."/>
            <person name="Truffi D."/>
            <person name="Tsukumo F."/>
            <person name="Yanai G.M."/>
            <person name="Zaros L.G."/>
            <person name="Civerolo E.L."/>
            <person name="Simpson A.J.G."/>
            <person name="Almeida N.F. Jr."/>
            <person name="Setubal J.C."/>
            <person name="Kitajima J.P."/>
        </authorList>
    </citation>
    <scope>NUCLEOTIDE SEQUENCE [LARGE SCALE GENOMIC DNA]</scope>
    <source>
        <strain>Temecula1 / ATCC 700964</strain>
    </source>
</reference>
<accession>Q87BG1</accession>
<evidence type="ECO:0000250" key="1"/>
<evidence type="ECO:0000250" key="2">
    <source>
        <dbReference type="UniProtKB" id="P0ADG4"/>
    </source>
</evidence>
<evidence type="ECO:0000305" key="3"/>
<protein>
    <recommendedName>
        <fullName evidence="2">Nus factor SuhB</fullName>
    </recommendedName>
    <alternativeName>
        <fullName>Inositol-1-monophosphatase</fullName>
        <shortName>I-1-Pase</shortName>
        <shortName>IMPase</shortName>
        <shortName>Inositol-1-phosphatase</shortName>
        <ecNumber evidence="2">3.1.3.25</ecNumber>
    </alternativeName>
</protein>
<gene>
    <name type="primary">suhB</name>
    <name type="ordered locus">PD_1493</name>
</gene>
<comment type="function">
    <text evidence="2">Part of the processive rRNA transcription and antitermination complex (rrnTAC). The complex forms an RNA-chaperone ring around the RNA exit tunnel of RNA polymerase (RNAP). It supports rapid transcription and antitermination of rRNA operons, cotranscriptional rRNA folding, and annealing of distal rRNA regions to allow correct ribosome biogenesis. This subunit may play a central role in organizing the structure.</text>
</comment>
<comment type="catalytic activity">
    <reaction evidence="2">
        <text>a myo-inositol phosphate + H2O = myo-inositol + phosphate</text>
        <dbReference type="Rhea" id="RHEA:24056"/>
        <dbReference type="ChEBI" id="CHEBI:15377"/>
        <dbReference type="ChEBI" id="CHEBI:17268"/>
        <dbReference type="ChEBI" id="CHEBI:43474"/>
        <dbReference type="ChEBI" id="CHEBI:84139"/>
        <dbReference type="EC" id="3.1.3.25"/>
    </reaction>
</comment>
<comment type="cofactor">
    <cofactor evidence="2">
        <name>Mg(2+)</name>
        <dbReference type="ChEBI" id="CHEBI:18420"/>
    </cofactor>
</comment>
<comment type="subunit">
    <text evidence="2">Homodimer. The rRNA transcription and antitermination complex (rrnTAC) consists of RNA polymerase (RNAP), NusA, NusB, NusE (rpsJ), NusG, SubB, ribosomal protein S4, DNA and precursor rRNA; S4 is more flexible than other subunits.</text>
</comment>
<comment type="subcellular location">
    <subcellularLocation>
        <location evidence="2">Cytoplasm</location>
    </subcellularLocation>
</comment>
<comment type="similarity">
    <text evidence="3">Belongs to the inositol monophosphatase superfamily.</text>
</comment>